<sequence>AAAELSLVQLESLREVCEQ</sequence>
<accession>P83473</accession>
<reference evidence="6" key="1">
    <citation type="journal article" date="2004" name="Calcif. Tissue Int.">
        <title>Characterization of osteocalcin (BGP) and matrix Gla protein (MGP) fish specific antibodies: validation for immunodetection studies in lower vertebrates.</title>
        <authorList>
            <person name="Simes D.C."/>
            <person name="Williamson M.K."/>
            <person name="Schaff B.J."/>
            <person name="Gavaia P.J."/>
            <person name="Ingleton P.M."/>
            <person name="Price P.A."/>
            <person name="Cancela M.L."/>
        </authorList>
    </citation>
    <scope>PROTEIN SEQUENCE</scope>
    <scope>SUBCELLULAR LOCATION</scope>
    <scope>GAMMA-CARBOXYGLUTAMATION AT GLU-11; GLU-15 AND GLU-18</scope>
    <source>
        <tissue>Cartilage</tissue>
    </source>
</reference>
<keyword id="KW-0091">Biomineralization</keyword>
<keyword id="KW-0106">Calcium</keyword>
<keyword id="KW-0903">Direct protein sequencing</keyword>
<keyword id="KW-0301">Gamma-carboxyglutamic acid</keyword>
<keyword id="KW-0372">Hormone</keyword>
<keyword id="KW-0479">Metal-binding</keyword>
<keyword id="KW-0964">Secreted</keyword>
<organism>
    <name type="scientific">Halobatrachus didactylus</name>
    <name type="common">Lusitanian toadfish</name>
    <name type="synonym">Batrachus didactylus</name>
    <dbReference type="NCBI Taxonomy" id="101187"/>
    <lineage>
        <taxon>Eukaryota</taxon>
        <taxon>Metazoa</taxon>
        <taxon>Chordata</taxon>
        <taxon>Craniata</taxon>
        <taxon>Vertebrata</taxon>
        <taxon>Euteleostomi</taxon>
        <taxon>Actinopterygii</taxon>
        <taxon>Neopterygii</taxon>
        <taxon>Teleostei</taxon>
        <taxon>Neoteleostei</taxon>
        <taxon>Acanthomorphata</taxon>
        <taxon>Batrachoidaria</taxon>
        <taxon>Batrachoididae</taxon>
        <taxon>Halobatrachus</taxon>
    </lineage>
</organism>
<feature type="chain" id="PRO_0000148909" description="Osteocalcin">
    <location>
        <begin position="1"/>
        <end position="19" status="greater than"/>
    </location>
</feature>
<feature type="domain" description="Gla" evidence="3 6">
    <location>
        <begin position="1"/>
        <end position="19" status="greater than"/>
    </location>
</feature>
<feature type="binding site" evidence="1">
    <location>
        <position position="11"/>
    </location>
    <ligand>
        <name>Ca(2+)</name>
        <dbReference type="ChEBI" id="CHEBI:29108"/>
        <label>1</label>
    </ligand>
</feature>
<feature type="binding site" evidence="1">
    <location>
        <position position="15"/>
    </location>
    <ligand>
        <name>Ca(2+)</name>
        <dbReference type="ChEBI" id="CHEBI:29108"/>
        <label>2</label>
    </ligand>
</feature>
<feature type="binding site" evidence="1">
    <location>
        <position position="18"/>
    </location>
    <ligand>
        <name>Ca(2+)</name>
        <dbReference type="ChEBI" id="CHEBI:29108"/>
        <label>2</label>
    </ligand>
</feature>
<feature type="binding site" evidence="1">
    <location>
        <position position="18"/>
    </location>
    <ligand>
        <name>Ca(2+)</name>
        <dbReference type="ChEBI" id="CHEBI:29108"/>
        <label>3</label>
    </ligand>
</feature>
<feature type="modified residue" description="4-carboxyglutamate" evidence="3 4">
    <location>
        <position position="11"/>
    </location>
</feature>
<feature type="modified residue" description="4-carboxyglutamate" evidence="3 4">
    <location>
        <position position="15"/>
    </location>
</feature>
<feature type="modified residue" description="4-carboxyglutamate" evidence="3 4">
    <location>
        <position position="18"/>
    </location>
</feature>
<feature type="non-terminal residue" evidence="5">
    <location>
        <position position="19"/>
    </location>
</feature>
<evidence type="ECO:0000250" key="1">
    <source>
        <dbReference type="UniProtKB" id="P02820"/>
    </source>
</evidence>
<evidence type="ECO:0000250" key="2">
    <source>
        <dbReference type="UniProtKB" id="P86546"/>
    </source>
</evidence>
<evidence type="ECO:0000255" key="3">
    <source>
        <dbReference type="PROSITE-ProRule" id="PRU00463"/>
    </source>
</evidence>
<evidence type="ECO:0000269" key="4">
    <source>
    </source>
</evidence>
<evidence type="ECO:0000303" key="5">
    <source>
    </source>
</evidence>
<evidence type="ECO:0000305" key="6"/>
<name>OSTCN_HALDD</name>
<protein>
    <recommendedName>
        <fullName>Osteocalcin</fullName>
    </recommendedName>
    <alternativeName>
        <fullName>Bone Gla protein</fullName>
        <shortName>BGP</shortName>
    </alternativeName>
    <alternativeName>
        <fullName>Gamma-carboxyglutamic acid-containing protein</fullName>
    </alternativeName>
</protein>
<dbReference type="GO" id="GO:0031012">
    <property type="term" value="C:extracellular matrix"/>
    <property type="evidence" value="ECO:0000304"/>
    <property type="project" value="UniProtKB"/>
</dbReference>
<dbReference type="GO" id="GO:0005576">
    <property type="term" value="C:extracellular region"/>
    <property type="evidence" value="ECO:0007669"/>
    <property type="project" value="UniProtKB-SubCell"/>
</dbReference>
<dbReference type="GO" id="GO:0005179">
    <property type="term" value="F:hormone activity"/>
    <property type="evidence" value="ECO:0000250"/>
    <property type="project" value="UniProtKB"/>
</dbReference>
<dbReference type="GO" id="GO:0046872">
    <property type="term" value="F:metal ion binding"/>
    <property type="evidence" value="ECO:0007669"/>
    <property type="project" value="UniProtKB-KW"/>
</dbReference>
<dbReference type="GO" id="GO:0008147">
    <property type="term" value="F:structural constituent of bone"/>
    <property type="evidence" value="ECO:0000250"/>
    <property type="project" value="UniProtKB"/>
</dbReference>
<dbReference type="GO" id="GO:0030282">
    <property type="term" value="P:bone mineralization"/>
    <property type="evidence" value="ECO:0000304"/>
    <property type="project" value="UniProtKB"/>
</dbReference>
<dbReference type="GO" id="GO:0032869">
    <property type="term" value="P:cellular response to insulin stimulus"/>
    <property type="evidence" value="ECO:0000250"/>
    <property type="project" value="UniProtKB"/>
</dbReference>
<dbReference type="GO" id="GO:0042593">
    <property type="term" value="P:glucose homeostasis"/>
    <property type="evidence" value="ECO:0000250"/>
    <property type="project" value="UniProtKB"/>
</dbReference>
<dbReference type="GO" id="GO:1903011">
    <property type="term" value="P:negative regulation of bone development"/>
    <property type="evidence" value="ECO:0000250"/>
    <property type="project" value="UniProtKB"/>
</dbReference>
<dbReference type="GO" id="GO:0044342">
    <property type="term" value="P:type B pancreatic cell proliferation"/>
    <property type="evidence" value="ECO:0000250"/>
    <property type="project" value="UniProtKB"/>
</dbReference>
<comment type="function">
    <text evidence="2">The carboxylated form is one of the main organic components of the bone matrix, which constitutes 1-2% of the total bone protein (By similarity). The carboxylated form binds strongly to apatite and calcium (By similarity).</text>
</comment>
<comment type="subcellular location">
    <subcellularLocation>
        <location evidence="4">Secreted</location>
    </subcellularLocation>
</comment>
<comment type="PTM">
    <text evidence="3 4 6">Gamma-carboxyglutamate residues are formed by vitamin K dependent carboxylation by GGCX. These residues are essential for the binding of calcium.</text>
</comment>
<comment type="similarity">
    <text evidence="6">Belongs to the osteocalcin/matrix Gla protein family.</text>
</comment>
<proteinExistence type="evidence at protein level"/>
<gene>
    <name type="primary">bglap</name>
</gene>